<name>ADAM7_RAT</name>
<protein>
    <recommendedName>
        <fullName evidence="9">Disintegrin and metalloproteinase domain-containing protein 7</fullName>
        <shortName>ADAM 7</shortName>
    </recommendedName>
    <alternativeName>
        <fullName evidence="9">Epididymal apical protein I</fullName>
        <shortName evidence="9">EAP I</shortName>
    </alternativeName>
</protein>
<evidence type="ECO:0000250" key="1"/>
<evidence type="ECO:0000250" key="2">
    <source>
        <dbReference type="UniProtKB" id="O35227"/>
    </source>
</evidence>
<evidence type="ECO:0000255" key="3"/>
<evidence type="ECO:0000255" key="4">
    <source>
        <dbReference type="PROSITE-ProRule" id="PRU00068"/>
    </source>
</evidence>
<evidence type="ECO:0000255" key="5">
    <source>
        <dbReference type="PROSITE-ProRule" id="PRU00276"/>
    </source>
</evidence>
<evidence type="ECO:0000256" key="6">
    <source>
        <dbReference type="SAM" id="MobiDB-lite"/>
    </source>
</evidence>
<evidence type="ECO:0000269" key="7">
    <source>
    </source>
</evidence>
<evidence type="ECO:0000305" key="8"/>
<evidence type="ECO:0000312" key="9">
    <source>
        <dbReference type="RGD" id="62032"/>
    </source>
</evidence>
<keyword id="KW-0903">Direct protein sequencing</keyword>
<keyword id="KW-1015">Disulfide bond</keyword>
<keyword id="KW-0325">Glycoprotein</keyword>
<keyword id="KW-0472">Membrane</keyword>
<keyword id="KW-1185">Reference proteome</keyword>
<keyword id="KW-0732">Signal</keyword>
<keyword id="KW-0812">Transmembrane</keyword>
<keyword id="KW-1133">Transmembrane helix</keyword>
<reference key="1">
    <citation type="journal article" date="1992" name="Biochem. J.">
        <title>A mammalian epididymal protein with remarkable sequence similarity to snake venom haemorrhagic peptides.</title>
        <authorList>
            <person name="Perry A.C.F."/>
            <person name="Jones R."/>
            <person name="Barker P.J."/>
            <person name="Hall L."/>
        </authorList>
    </citation>
    <scope>NUCLEOTIDE SEQUENCE [MRNA]</scope>
    <scope>PROTEIN SEQUENCE OF 26-38</scope>
    <scope>TISSUE SPECIFICITY</scope>
    <source>
        <tissue>Epididymis</tissue>
    </source>
</reference>
<feature type="signal peptide" evidence="7">
    <location>
        <begin position="1"/>
        <end position="25"/>
    </location>
</feature>
<feature type="propeptide" id="PRO_0000029058" evidence="3">
    <location>
        <begin position="26"/>
        <end position="176"/>
    </location>
</feature>
<feature type="chain" id="PRO_0000029059" description="Disintegrin and metalloproteinase domain-containing protein 7">
    <location>
        <begin position="177"/>
        <end position="789"/>
    </location>
</feature>
<feature type="topological domain" description="Extracellular" evidence="3">
    <location>
        <begin position="177"/>
        <end position="668"/>
    </location>
</feature>
<feature type="transmembrane region" description="Helical" evidence="3">
    <location>
        <begin position="669"/>
        <end position="689"/>
    </location>
</feature>
<feature type="topological domain" description="Cytoplasmic" evidence="3">
    <location>
        <begin position="690"/>
        <end position="789"/>
    </location>
</feature>
<feature type="domain" description="Peptidase M12B" evidence="5">
    <location>
        <begin position="199"/>
        <end position="393"/>
    </location>
</feature>
<feature type="domain" description="Disintegrin" evidence="4">
    <location>
        <begin position="401"/>
        <end position="487"/>
    </location>
</feature>
<feature type="region of interest" description="Disordered" evidence="6">
    <location>
        <begin position="762"/>
        <end position="789"/>
    </location>
</feature>
<feature type="compositionally biased region" description="Basic and acidic residues" evidence="6">
    <location>
        <begin position="762"/>
        <end position="771"/>
    </location>
</feature>
<feature type="compositionally biased region" description="Polar residues" evidence="6">
    <location>
        <begin position="772"/>
        <end position="789"/>
    </location>
</feature>
<feature type="glycosylation site" description="N-linked (GlcNAc...) asparagine" evidence="3">
    <location>
        <position position="84"/>
    </location>
</feature>
<feature type="glycosylation site" description="N-linked (GlcNAc...) asparagine" evidence="3">
    <location>
        <position position="167"/>
    </location>
</feature>
<feature type="glycosylation site" description="N-linked (GlcNAc...) asparagine" evidence="3">
    <location>
        <position position="174"/>
    </location>
</feature>
<feature type="glycosylation site" description="N-linked (GlcNAc...) asparagine" evidence="3">
    <location>
        <position position="583"/>
    </location>
</feature>
<feature type="glycosylation site" description="N-linked (GlcNAc...) asparagine" evidence="3">
    <location>
        <position position="628"/>
    </location>
</feature>
<feature type="glycosylation site" description="N-linked (GlcNAc...) asparagine" evidence="3">
    <location>
        <position position="664"/>
    </location>
</feature>
<feature type="disulfide bond" evidence="1">
    <location>
        <begin position="310"/>
        <end position="388"/>
    </location>
</feature>
<feature type="disulfide bond" evidence="1">
    <location>
        <begin position="350"/>
        <end position="372"/>
    </location>
</feature>
<feature type="disulfide bond" evidence="1">
    <location>
        <begin position="352"/>
        <end position="357"/>
    </location>
</feature>
<feature type="disulfide bond" evidence="1">
    <location>
        <begin position="459"/>
        <end position="479"/>
    </location>
</feature>
<dbReference type="EMBL" id="X66140">
    <property type="protein sequence ID" value="CAA46930.1"/>
    <property type="molecule type" value="mRNA"/>
</dbReference>
<dbReference type="PIR" id="S28259">
    <property type="entry name" value="S28259"/>
</dbReference>
<dbReference type="RefSeq" id="NP_064697.1">
    <property type="nucleotide sequence ID" value="NM_020301.1"/>
</dbReference>
<dbReference type="SMR" id="Q63180"/>
<dbReference type="FunCoup" id="Q63180">
    <property type="interactions" value="6"/>
</dbReference>
<dbReference type="STRING" id="10116.ENSRNOP00000019209"/>
<dbReference type="MEROPS" id="M12.956"/>
<dbReference type="GlyCosmos" id="Q63180">
    <property type="glycosylation" value="6 sites, No reported glycans"/>
</dbReference>
<dbReference type="GlyGen" id="Q63180">
    <property type="glycosylation" value="6 sites"/>
</dbReference>
<dbReference type="PhosphoSitePlus" id="Q63180"/>
<dbReference type="PaxDb" id="10116-ENSRNOP00000019209"/>
<dbReference type="GeneID" id="29641"/>
<dbReference type="KEGG" id="rno:29641"/>
<dbReference type="UCSC" id="RGD:62032">
    <property type="organism name" value="rat"/>
</dbReference>
<dbReference type="AGR" id="RGD:62032"/>
<dbReference type="CTD" id="8756"/>
<dbReference type="RGD" id="62032">
    <property type="gene designation" value="Adam7"/>
</dbReference>
<dbReference type="eggNOG" id="KOG3607">
    <property type="taxonomic scope" value="Eukaryota"/>
</dbReference>
<dbReference type="InParanoid" id="Q63180"/>
<dbReference type="PhylomeDB" id="Q63180"/>
<dbReference type="PRO" id="PR:Q63180"/>
<dbReference type="Proteomes" id="UP000002494">
    <property type="component" value="Unplaced"/>
</dbReference>
<dbReference type="GO" id="GO:0045177">
    <property type="term" value="C:apical part of cell"/>
    <property type="evidence" value="ECO:0000314"/>
    <property type="project" value="RGD"/>
</dbReference>
<dbReference type="GO" id="GO:0009986">
    <property type="term" value="C:cell surface"/>
    <property type="evidence" value="ECO:0000266"/>
    <property type="project" value="RGD"/>
</dbReference>
<dbReference type="GO" id="GO:0005886">
    <property type="term" value="C:plasma membrane"/>
    <property type="evidence" value="ECO:0000266"/>
    <property type="project" value="RGD"/>
</dbReference>
<dbReference type="GO" id="GO:0004175">
    <property type="term" value="F:endopeptidase activity"/>
    <property type="evidence" value="ECO:0000266"/>
    <property type="project" value="RGD"/>
</dbReference>
<dbReference type="GO" id="GO:0004222">
    <property type="term" value="F:metalloendopeptidase activity"/>
    <property type="evidence" value="ECO:0000318"/>
    <property type="project" value="GO_Central"/>
</dbReference>
<dbReference type="GO" id="GO:1905867">
    <property type="term" value="P:epididymis development"/>
    <property type="evidence" value="ECO:0000250"/>
    <property type="project" value="UniProtKB"/>
</dbReference>
<dbReference type="GO" id="GO:0003382">
    <property type="term" value="P:epithelial cell morphogenesis"/>
    <property type="evidence" value="ECO:0000250"/>
    <property type="project" value="UniProtKB"/>
</dbReference>
<dbReference type="GO" id="GO:1902093">
    <property type="term" value="P:positive regulation of flagellated sperm motility"/>
    <property type="evidence" value="ECO:0000250"/>
    <property type="project" value="UniProtKB"/>
</dbReference>
<dbReference type="GO" id="GO:1902492">
    <property type="term" value="P:positive regulation of sperm capacitation"/>
    <property type="evidence" value="ECO:0000250"/>
    <property type="project" value="UniProtKB"/>
</dbReference>
<dbReference type="GO" id="GO:0006508">
    <property type="term" value="P:proteolysis"/>
    <property type="evidence" value="ECO:0000318"/>
    <property type="project" value="GO_Central"/>
</dbReference>
<dbReference type="CDD" id="cd04269">
    <property type="entry name" value="ZnMc_adamalysin_II_like"/>
    <property type="match status" value="1"/>
</dbReference>
<dbReference type="FunFam" id="3.40.390.10:FF:000002">
    <property type="entry name" value="Disintegrin and metalloproteinase domain-containing protein 22"/>
    <property type="match status" value="1"/>
</dbReference>
<dbReference type="FunFam" id="4.10.70.10:FF:000001">
    <property type="entry name" value="Disintegrin and metalloproteinase domain-containing protein 22"/>
    <property type="match status" value="1"/>
</dbReference>
<dbReference type="Gene3D" id="3.40.390.10">
    <property type="entry name" value="Collagenase (Catalytic Domain)"/>
    <property type="match status" value="1"/>
</dbReference>
<dbReference type="Gene3D" id="4.10.70.10">
    <property type="entry name" value="Disintegrin domain"/>
    <property type="match status" value="1"/>
</dbReference>
<dbReference type="InterPro" id="IPR006586">
    <property type="entry name" value="ADAM_Cys-rich"/>
</dbReference>
<dbReference type="InterPro" id="IPR018358">
    <property type="entry name" value="Disintegrin_CS"/>
</dbReference>
<dbReference type="InterPro" id="IPR001762">
    <property type="entry name" value="Disintegrin_dom"/>
</dbReference>
<dbReference type="InterPro" id="IPR036436">
    <property type="entry name" value="Disintegrin_dom_sf"/>
</dbReference>
<dbReference type="InterPro" id="IPR024079">
    <property type="entry name" value="MetalloPept_cat_dom_sf"/>
</dbReference>
<dbReference type="InterPro" id="IPR001590">
    <property type="entry name" value="Peptidase_M12B"/>
</dbReference>
<dbReference type="InterPro" id="IPR002870">
    <property type="entry name" value="Peptidase_M12B_N"/>
</dbReference>
<dbReference type="InterPro" id="IPR034027">
    <property type="entry name" value="Reprolysin_adamalysin"/>
</dbReference>
<dbReference type="PANTHER" id="PTHR11905">
    <property type="entry name" value="ADAM A DISINTEGRIN AND METALLOPROTEASE DOMAIN"/>
    <property type="match status" value="1"/>
</dbReference>
<dbReference type="PANTHER" id="PTHR11905:SF21">
    <property type="entry name" value="DISINTEGRIN AND METALLOPROTEINASE DOMAIN-CONTAINING PROTEIN 7"/>
    <property type="match status" value="1"/>
</dbReference>
<dbReference type="Pfam" id="PF08516">
    <property type="entry name" value="ADAM_CR"/>
    <property type="match status" value="1"/>
</dbReference>
<dbReference type="Pfam" id="PF00200">
    <property type="entry name" value="Disintegrin"/>
    <property type="match status" value="1"/>
</dbReference>
<dbReference type="Pfam" id="PF01562">
    <property type="entry name" value="Pep_M12B_propep"/>
    <property type="match status" value="1"/>
</dbReference>
<dbReference type="Pfam" id="PF01421">
    <property type="entry name" value="Reprolysin"/>
    <property type="match status" value="1"/>
</dbReference>
<dbReference type="PRINTS" id="PR00289">
    <property type="entry name" value="DISINTEGRIN"/>
</dbReference>
<dbReference type="SMART" id="SM00608">
    <property type="entry name" value="ACR"/>
    <property type="match status" value="1"/>
</dbReference>
<dbReference type="SMART" id="SM00050">
    <property type="entry name" value="DISIN"/>
    <property type="match status" value="1"/>
</dbReference>
<dbReference type="SUPFAM" id="SSF57552">
    <property type="entry name" value="Blood coagulation inhibitor (disintegrin)"/>
    <property type="match status" value="1"/>
</dbReference>
<dbReference type="SUPFAM" id="SSF55486">
    <property type="entry name" value="Metalloproteases ('zincins'), catalytic domain"/>
    <property type="match status" value="1"/>
</dbReference>
<dbReference type="PROSITE" id="PS50215">
    <property type="entry name" value="ADAM_MEPRO"/>
    <property type="match status" value="1"/>
</dbReference>
<dbReference type="PROSITE" id="PS00427">
    <property type="entry name" value="DISINTEGRIN_1"/>
    <property type="match status" value="1"/>
</dbReference>
<dbReference type="PROSITE" id="PS50214">
    <property type="entry name" value="DISINTEGRIN_2"/>
    <property type="match status" value="1"/>
</dbReference>
<proteinExistence type="evidence at protein level"/>
<organism>
    <name type="scientific">Rattus norvegicus</name>
    <name type="common">Rat</name>
    <dbReference type="NCBI Taxonomy" id="10116"/>
    <lineage>
        <taxon>Eukaryota</taxon>
        <taxon>Metazoa</taxon>
        <taxon>Chordata</taxon>
        <taxon>Craniata</taxon>
        <taxon>Vertebrata</taxon>
        <taxon>Euteleostomi</taxon>
        <taxon>Mammalia</taxon>
        <taxon>Eutheria</taxon>
        <taxon>Euarchontoglires</taxon>
        <taxon>Glires</taxon>
        <taxon>Rodentia</taxon>
        <taxon>Myomorpha</taxon>
        <taxon>Muroidea</taxon>
        <taxon>Muridae</taxon>
        <taxon>Murinae</taxon>
        <taxon>Rattus</taxon>
    </lineage>
</organism>
<comment type="function">
    <text evidence="2">Required for normal male fertility via maintenance of epithelial cell morphology in the caput epididymis and subsequently correct epididymis lumen structure required for sperm development (By similarity). Plays a role in sperm motility, flagella morphology and tyrosine phosphorylation during sperm capacitance (By similarity). Plays a role in normal expression levels of HSPA5, ITM2B and ADAM2 in sperm both prior to and post-capacitation (By similarity). This is a non catalytic metalloprotease-like protein (By similarity).</text>
</comment>
<comment type="subunit">
    <text evidence="2">Interacts with ITM2B in sperm; the interaction increases following capacitation (By similarity). Interacts with HSPA5 and CANX (By similarity).</text>
</comment>
<comment type="subcellular location">
    <subcellularLocation>
        <location evidence="8">Membrane</location>
        <topology evidence="3">Single-pass type I membrane protein</topology>
    </subcellularLocation>
</comment>
<comment type="tissue specificity">
    <text evidence="7">Expressed specifically in the caput region of the epididymis (at protein level).</text>
</comment>
<sequence length="789" mass="89362">MFPTGIFLMSVLISQMQGRGIVGVEGQELVHPKKLSLLQKRDLERIHDSDTPEEYEEELLYEIKLGRKTLTLHLLKAREFLALNYSETYYNIKREMVTRHPQILDHCFYQGSIIHEFDSAASISTCNGLRGFFRVNDQRYLIEPVKYSDEGDHLVFKYNVKAPYATNYSCEGLNFTKKSTLIDAKIIEEHKVEDYHKEKFIELFVVADEFVYRRNSKPQNKLRKRIWGMVNFVNMIYKALNIRVTLTGMEIWSAGDEIEIVSNLESTLLHFSTWQETVLKKRKDFDHVILLSGKWLYTSMQGIAYPGGICQTLRSCSVVKDLLPDVNIIGNRMAHQLGHSLGMRHDDFPCTCPLGKCVMGAGSIPAIKFSKCSQTQYQQFLKNQKPACILNNPLPEEFNDYPFCGNKKVDEGEECDCGPVQECTNPCCDAHKCVLKPGFTCVEGECCESCQMKKEGVICRPAKNECDISEVCTGYSPECPKDESQANGFPCKNGEGYCFMGLCPTRDDQCAELFSGGAEESHSLCYRMNQKGNRFGYCKNKDNTFVPCEEKDLKCGKIYCTGGRRSAHLGEDKTYNLKNVKQNISIKCKTMFLYHNSRDMGLVNSGTKCGEGMVCSNGECIEMEKAYNSTICSSLCDENDVDDNEPDCQCEEGPIITEWGEALNLTSVSIMVVVLVMVIIGVGLVILLIRYQKCIKMKQVQSSSREIRGIENKVYFPDEHQTRSEPIFTDIYPLHNTAESLERVPSTFSSPHYITLKSVSKDPRGIADPKQNDNMNLNLDSQSDCTRLG</sequence>
<accession>Q63180</accession>
<gene>
    <name evidence="9" type="primary">Adam7</name>
    <name evidence="9" type="synonym">Eapi</name>
</gene>